<name>SLMAP_RABIT</name>
<comment type="function">
    <text evidence="3 4">Associates with the striatin-interacting phosphatase and kinase (STRIPAK) core complex, forming the extended (SIKE1:SLMAP)STRIPAK complex. The (SIKE1:SLMAP)STRIPAK complex dephosphorylates STK3 leading to the inhibition of Hippo signaling and the control of cell growth (By similarity). May play a role during myoblast fusion (By similarity).</text>
</comment>
<comment type="subunit">
    <text evidence="3 9">Homodimer. Interacts with myosin (PubMed:15591093). Interacts with SIKE1 and both associate with the STRIPAK core complex composed of PP2A catalytic and scaffolding subunits, the striatins (PP2A regulatory subunits), the striatin-associated proteins MOB4, STRIP1 and STRIP2, PDCD10 and members of the STE20 kinases, such as STK24 and STK26. Interacts (via FHA domain) with STK3 (when phosphorylated); the interaction associates STK3 with the STRIPAK complex (By similarity).</text>
</comment>
<comment type="subcellular location">
    <subcellularLocation>
        <location evidence="10">Cell membrane</location>
        <location evidence="10">Sarcolemma</location>
        <topology evidence="10">Single-pass type IV membrane protein</topology>
    </subcellularLocation>
    <subcellularLocation>
        <location evidence="4">Cytoplasm</location>
        <location evidence="4">Myofibril</location>
        <location evidence="4">Sarcomere</location>
        <location evidence="4">M line</location>
    </subcellularLocation>
    <subcellularLocation>
        <location evidence="4">Cytoplasm</location>
        <location evidence="4">Myofibril</location>
        <location evidence="4">Sarcomere</location>
        <location evidence="4">Z line</location>
    </subcellularLocation>
    <subcellularLocation>
        <location evidence="4">Cytoplasm</location>
        <location evidence="4">Cytoskeleton</location>
        <location evidence="4">Microtubule organizing center</location>
        <location evidence="4">Centrosome</location>
    </subcellularLocation>
    <text evidence="2 4">Membrane-associated. Distributed in the transverse tubules and near the junctional sarcoplasmic reticulum (By similarity). Detected along the Z- and M-lines in cardiomyocytes (By similarity).</text>
</comment>
<comment type="subcellular location">
    <molecule>Isoform 1</molecule>
    <subcellularLocation>
        <location evidence="3">Endoplasmic reticulum membrane</location>
        <topology evidence="3">Single-pass type IV membrane protein</topology>
    </subcellularLocation>
    <subcellularLocation>
        <location evidence="3">Mitochondrion membrane</location>
        <topology evidence="3">Single-pass type IV membrane protein</topology>
    </subcellularLocation>
</comment>
<comment type="subcellular location">
    <molecule>Isoform 2</molecule>
    <subcellularLocation>
        <location evidence="3">Endoplasmic reticulum membrane</location>
        <topology evidence="3">Single-pass type IV membrane protein</topology>
    </subcellularLocation>
    <subcellularLocation>
        <location evidence="3">Mitochondrion membrane</location>
        <topology evidence="3">Single-pass type IV membrane protein</topology>
    </subcellularLocation>
</comment>
<comment type="subcellular location">
    <molecule>Isoform 3</molecule>
    <subcellularLocation>
        <location evidence="3">Endoplasmic reticulum membrane</location>
        <topology evidence="3">Single-pass type IV membrane protein</topology>
    </subcellularLocation>
    <subcellularLocation>
        <location evidence="3">Mitochondrion membrane</location>
        <topology evidence="3">Single-pass type IV membrane protein</topology>
    </subcellularLocation>
</comment>
<comment type="subcellular location">
    <molecule>Isoform 4</molecule>
    <subcellularLocation>
        <location evidence="3">Endoplasmic reticulum membrane</location>
        <topology evidence="3">Single-pass type IV membrane protein</topology>
    </subcellularLocation>
    <text evidence="3">Do not localize at the mitochondrial membrane.</text>
</comment>
<comment type="alternative products">
    <event type="alternative splicing"/>
    <isoform>
        <id>Q28623-1</id>
        <name>1</name>
        <name>Sarcolemmal-associated protein-3</name>
        <name>SLAP3</name>
        <sequence type="displayed"/>
    </isoform>
    <isoform>
        <id>Q28623-2</id>
        <name>2</name>
        <name>Sarcolemmal-associated protein-2</name>
        <name>SLAP2</name>
        <sequence type="described" ref="VSP_021521 VSP_021522"/>
    </isoform>
    <isoform>
        <id>Q28623-3</id>
        <name>3</name>
        <name>Sarcolemmal-associated protein-1</name>
        <name>SLAP1</name>
        <sequence type="described" ref="VSP_021519"/>
    </isoform>
    <isoform>
        <id>Q28623-4</id>
        <name>4</name>
        <sequence type="described" ref="VSP_021520 VSP_021523 VSP_021524"/>
    </isoform>
    <text>Some isoforms exhibit tissue specific expression.</text>
</comment>
<comment type="tissue specificity">
    <text evidence="8 10">Expressed in heart (at protein level). Expressed in heart, skeletal muscle, smooth muscle, kidney, spleen, pancreas and brain.</text>
</comment>
<comment type="domain">
    <text evidence="3">Alternative spliced transmembrane domains determine subcellular targeting. Isoforms 1, 2, 3 and 4 are targeted to endoplasmic reticulum membrane as well as mitochondrion membrane. Isoform 5 is not targeted to mitochondrion membrane but to endoplasmic reticulum membrane.</text>
</comment>
<comment type="similarity">
    <text evidence="13">Belongs to the SLMAP family.</text>
</comment>
<comment type="sequence caution" evidence="13">
    <conflict type="erroneous initiation">
        <sequence resource="EMBL-CDS" id="AAA65597"/>
    </conflict>
    <text>Truncated N-terminus.</text>
</comment>
<organism>
    <name type="scientific">Oryctolagus cuniculus</name>
    <name type="common">Rabbit</name>
    <dbReference type="NCBI Taxonomy" id="9986"/>
    <lineage>
        <taxon>Eukaryota</taxon>
        <taxon>Metazoa</taxon>
        <taxon>Chordata</taxon>
        <taxon>Craniata</taxon>
        <taxon>Vertebrata</taxon>
        <taxon>Euteleostomi</taxon>
        <taxon>Mammalia</taxon>
        <taxon>Eutheria</taxon>
        <taxon>Euarchontoglires</taxon>
        <taxon>Glires</taxon>
        <taxon>Lagomorpha</taxon>
        <taxon>Leporidae</taxon>
        <taxon>Oryctolagus</taxon>
    </lineage>
</organism>
<protein>
    <recommendedName>
        <fullName>Sarcolemmal membrane-associated protein</fullName>
        <shortName>Sarcolemmal-associated protein</shortName>
    </recommendedName>
</protein>
<evidence type="ECO:0000250" key="1"/>
<evidence type="ECO:0000250" key="2">
    <source>
        <dbReference type="UniProtKB" id="P0C219"/>
    </source>
</evidence>
<evidence type="ECO:0000250" key="3">
    <source>
        <dbReference type="UniProtKB" id="Q14BN4"/>
    </source>
</evidence>
<evidence type="ECO:0000250" key="4">
    <source>
        <dbReference type="UniProtKB" id="Q3URD3"/>
    </source>
</evidence>
<evidence type="ECO:0000255" key="5"/>
<evidence type="ECO:0000255" key="6">
    <source>
        <dbReference type="PROSITE-ProRule" id="PRU00086"/>
    </source>
</evidence>
<evidence type="ECO:0000256" key="7">
    <source>
        <dbReference type="SAM" id="MobiDB-lite"/>
    </source>
</evidence>
<evidence type="ECO:0000269" key="8">
    <source>
    </source>
</evidence>
<evidence type="ECO:0000269" key="9">
    <source>
    </source>
</evidence>
<evidence type="ECO:0000269" key="10">
    <source>
    </source>
</evidence>
<evidence type="ECO:0000303" key="11">
    <source>
    </source>
</evidence>
<evidence type="ECO:0000303" key="12">
    <source>
    </source>
</evidence>
<evidence type="ECO:0000305" key="13"/>
<dbReference type="EMBL" id="U21155">
    <property type="protein sequence ID" value="AAA65598.1"/>
    <property type="molecule type" value="mRNA"/>
</dbReference>
<dbReference type="EMBL" id="U21156">
    <property type="protein sequence ID" value="AAA65596.1"/>
    <property type="molecule type" value="mRNA"/>
</dbReference>
<dbReference type="EMBL" id="U21157">
    <property type="protein sequence ID" value="AAA65597.1"/>
    <property type="status" value="ALT_INIT"/>
    <property type="molecule type" value="mRNA"/>
</dbReference>
<dbReference type="EMBL" id="AF304449">
    <property type="protein sequence ID" value="AAG41948.1"/>
    <property type="molecule type" value="mRNA"/>
</dbReference>
<dbReference type="RefSeq" id="XP_008258693.1">
    <property type="nucleotide sequence ID" value="XM_008260471.2"/>
</dbReference>
<dbReference type="RefSeq" id="XP_017199132.1">
    <property type="nucleotide sequence ID" value="XM_017343643.1"/>
</dbReference>
<dbReference type="RefSeq" id="XP_051707026.1">
    <molecule id="Q28623-1"/>
    <property type="nucleotide sequence ID" value="XM_051851066.2"/>
</dbReference>
<dbReference type="RefSeq" id="XP_069905888.1">
    <molecule id="Q28623-4"/>
    <property type="nucleotide sequence ID" value="XM_070049787.1"/>
</dbReference>
<dbReference type="RefSeq" id="XP_069905889.1">
    <molecule id="Q28623-3"/>
    <property type="nucleotide sequence ID" value="XM_070049788.1"/>
</dbReference>
<dbReference type="SMR" id="Q28623"/>
<dbReference type="FunCoup" id="Q28623">
    <property type="interactions" value="363"/>
</dbReference>
<dbReference type="STRING" id="9986.ENSOCUP00000047213"/>
<dbReference type="Ensembl" id="ENSOCUT00000022997.2">
    <molecule id="Q28623-1"/>
    <property type="protein sequence ID" value="ENSOCUP00000018690.2"/>
    <property type="gene ID" value="ENSOCUG00000000827.4"/>
</dbReference>
<dbReference type="GeneID" id="100009199"/>
<dbReference type="eggNOG" id="KOG3872">
    <property type="taxonomic scope" value="Eukaryota"/>
</dbReference>
<dbReference type="GeneTree" id="ENSGT00940000157660"/>
<dbReference type="InParanoid" id="Q28623"/>
<dbReference type="OrthoDB" id="687730at2759"/>
<dbReference type="Proteomes" id="UP000001811">
    <property type="component" value="Chromosome 9"/>
</dbReference>
<dbReference type="Bgee" id="ENSOCUG00000000827">
    <property type="expression patterns" value="Expressed in aorta and 15 other cell types or tissues"/>
</dbReference>
<dbReference type="ExpressionAtlas" id="Q28623">
    <property type="expression patterns" value="baseline"/>
</dbReference>
<dbReference type="GO" id="GO:0005813">
    <property type="term" value="C:centrosome"/>
    <property type="evidence" value="ECO:0007669"/>
    <property type="project" value="UniProtKB-SubCell"/>
</dbReference>
<dbReference type="GO" id="GO:0005789">
    <property type="term" value="C:endoplasmic reticulum membrane"/>
    <property type="evidence" value="ECO:0007669"/>
    <property type="project" value="UniProtKB-SubCell"/>
</dbReference>
<dbReference type="GO" id="GO:0005615">
    <property type="term" value="C:extracellular space"/>
    <property type="evidence" value="ECO:0007669"/>
    <property type="project" value="InterPro"/>
</dbReference>
<dbReference type="GO" id="GO:0090443">
    <property type="term" value="C:FAR/SIN/STRIPAK complex"/>
    <property type="evidence" value="ECO:0000250"/>
    <property type="project" value="UniProtKB"/>
</dbReference>
<dbReference type="GO" id="GO:0031430">
    <property type="term" value="C:M band"/>
    <property type="evidence" value="ECO:0007669"/>
    <property type="project" value="UniProtKB-SubCell"/>
</dbReference>
<dbReference type="GO" id="GO:0031966">
    <property type="term" value="C:mitochondrial membrane"/>
    <property type="evidence" value="ECO:0007669"/>
    <property type="project" value="UniProtKB-SubCell"/>
</dbReference>
<dbReference type="GO" id="GO:0042383">
    <property type="term" value="C:sarcolemma"/>
    <property type="evidence" value="ECO:0007669"/>
    <property type="project" value="UniProtKB-SubCell"/>
</dbReference>
<dbReference type="GO" id="GO:0030018">
    <property type="term" value="C:Z disc"/>
    <property type="evidence" value="ECO:0007669"/>
    <property type="project" value="UniProtKB-SubCell"/>
</dbReference>
<dbReference type="GO" id="GO:0030674">
    <property type="term" value="F:protein-macromolecule adaptor activity"/>
    <property type="evidence" value="ECO:0000250"/>
    <property type="project" value="UniProtKB"/>
</dbReference>
<dbReference type="GO" id="GO:0035331">
    <property type="term" value="P:negative regulation of hippo signaling"/>
    <property type="evidence" value="ECO:0000250"/>
    <property type="project" value="UniProtKB"/>
</dbReference>
<dbReference type="GO" id="GO:0072659">
    <property type="term" value="P:protein localization to plasma membrane"/>
    <property type="evidence" value="ECO:0007669"/>
    <property type="project" value="TreeGrafter"/>
</dbReference>
<dbReference type="GO" id="GO:1900825">
    <property type="term" value="P:regulation of membrane depolarization during cardiac muscle cell action potential"/>
    <property type="evidence" value="ECO:0007669"/>
    <property type="project" value="TreeGrafter"/>
</dbReference>
<dbReference type="CDD" id="cd21911">
    <property type="entry name" value="CC1_SLMAP"/>
    <property type="match status" value="1"/>
</dbReference>
<dbReference type="CDD" id="cd22679">
    <property type="entry name" value="FHA_SLMAP"/>
    <property type="match status" value="1"/>
</dbReference>
<dbReference type="FunFam" id="2.60.200.20:FF:000003">
    <property type="entry name" value="sarcolemmal membrane-associated protein isoform X2"/>
    <property type="match status" value="1"/>
</dbReference>
<dbReference type="Gene3D" id="2.60.200.20">
    <property type="match status" value="1"/>
</dbReference>
<dbReference type="InterPro" id="IPR051176">
    <property type="entry name" value="Cent_Immune-Sig_Mod"/>
</dbReference>
<dbReference type="InterPro" id="IPR000253">
    <property type="entry name" value="FHA_dom"/>
</dbReference>
<dbReference type="InterPro" id="IPR001363">
    <property type="entry name" value="Prot_inh_fetuin_CS"/>
</dbReference>
<dbReference type="InterPro" id="IPR008984">
    <property type="entry name" value="SMAD_FHA_dom_sf"/>
</dbReference>
<dbReference type="PANTHER" id="PTHR15715">
    <property type="entry name" value="CENTROSOMAL PROTEIN OF 170 KDA"/>
    <property type="match status" value="1"/>
</dbReference>
<dbReference type="PANTHER" id="PTHR15715:SF22">
    <property type="entry name" value="SARCOLEMMAL MEMBRANE-ASSOCIATED PROTEIN"/>
    <property type="match status" value="1"/>
</dbReference>
<dbReference type="Pfam" id="PF00498">
    <property type="entry name" value="FHA"/>
    <property type="match status" value="1"/>
</dbReference>
<dbReference type="SMART" id="SM00240">
    <property type="entry name" value="FHA"/>
    <property type="match status" value="1"/>
</dbReference>
<dbReference type="SUPFAM" id="SSF49879">
    <property type="entry name" value="SMAD/FHA domain"/>
    <property type="match status" value="1"/>
</dbReference>
<dbReference type="PROSITE" id="PS50006">
    <property type="entry name" value="FHA_DOMAIN"/>
    <property type="match status" value="1"/>
</dbReference>
<gene>
    <name type="primary">SLMAP</name>
    <name type="synonym">SLAP</name>
</gene>
<accession>Q28623</accession>
<accession>Q28621</accession>
<accession>Q28622</accession>
<accession>Q9GK69</accession>
<feature type="chain" id="PRO_0000259664" description="Sarcolemmal membrane-associated protein">
    <location>
        <begin position="1"/>
        <end position="771"/>
    </location>
</feature>
<feature type="topological domain" description="Cytoplasmic" evidence="5">
    <location>
        <begin position="1"/>
        <end position="745"/>
    </location>
</feature>
<feature type="transmembrane region" description="Helical; Anchor for type IV membrane protein" evidence="5">
    <location>
        <begin position="746"/>
        <end position="766"/>
    </location>
</feature>
<feature type="topological domain" description="Extracellular" evidence="5">
    <location>
        <begin position="767"/>
        <end position="771"/>
    </location>
</feature>
<feature type="domain" description="FHA" evidence="6">
    <location>
        <begin position="28"/>
        <end position="85"/>
    </location>
</feature>
<feature type="region of interest" description="Necessary for targeting to centrosomes" evidence="1">
    <location>
        <begin position="1"/>
        <end position="163"/>
    </location>
</feature>
<feature type="region of interest" description="Disordered" evidence="7">
    <location>
        <begin position="420"/>
        <end position="450"/>
    </location>
</feature>
<feature type="coiled-coil region" evidence="5">
    <location>
        <begin position="167"/>
        <end position="202"/>
    </location>
</feature>
<feature type="coiled-coil region" evidence="5">
    <location>
        <begin position="230"/>
        <end position="381"/>
    </location>
</feature>
<feature type="coiled-coil region" evidence="5">
    <location>
        <begin position="452"/>
        <end position="742"/>
    </location>
</feature>
<feature type="compositionally biased region" description="Basic and acidic residues" evidence="7">
    <location>
        <begin position="420"/>
        <end position="429"/>
    </location>
</feature>
<feature type="modified residue" description="Phosphoserine" evidence="3">
    <location>
        <position position="148"/>
    </location>
</feature>
<feature type="modified residue" description="Phosphoserine" evidence="2">
    <location>
        <position position="431"/>
    </location>
</feature>
<feature type="modified residue" description="Phosphoserine" evidence="3">
    <location>
        <position position="435"/>
    </location>
</feature>
<feature type="splice variant" id="VSP_021519" description="In isoform 3." evidence="12">
    <location>
        <begin position="1"/>
        <end position="449"/>
    </location>
</feature>
<feature type="splice variant" id="VSP_021520" description="In isoform 4." evidence="11">
    <location>
        <begin position="1"/>
        <end position="408"/>
    </location>
</feature>
<feature type="splice variant" id="VSP_021521" description="In isoform 2." evidence="12">
    <location>
        <begin position="1"/>
        <end position="348"/>
    </location>
</feature>
<feature type="splice variant" id="VSP_021522" description="In isoform 2." evidence="12">
    <location>
        <begin position="380"/>
        <end position="400"/>
    </location>
</feature>
<feature type="splice variant" id="VSP_021523" description="In isoform 4." evidence="11">
    <original>TKVVEETKLAKENQARAKESDLSDTLSPSKEKSSDDTTDAQMDEQDLNESLAKVSLLK</original>
    <variation>MDEQDLNESLAKVSLLKDDLQGAQSETEAKQEIQHLRKELIEAQELARASKQKCFELQ</variation>
    <location>
        <begin position="409"/>
        <end position="466"/>
    </location>
</feature>
<feature type="splice variant" id="VSP_021524" description="In isoform 4." evidence="11">
    <original>KPWPWMPMLAALVAVTAIVLYVPGLARASP</original>
    <variation>PSILQPVPAVFIGLFLAFLFWCFGPLW</variation>
    <location>
        <begin position="742"/>
        <end position="771"/>
    </location>
</feature>
<proteinExistence type="evidence at protein level"/>
<reference key="1">
    <citation type="journal article" date="1997" name="J. Biol. Chem.">
        <title>Molecular cloning, expression, and chromosomal assignment of sarcolemmal-associated proteins. A family of acidic amphipathic alpha-helical proteins associated with the membrane.</title>
        <authorList>
            <person name="Wigle J.T."/>
            <person name="Demchyshyn L."/>
            <person name="Pratt M.A."/>
            <person name="Staines W.A."/>
            <person name="Salih M."/>
            <person name="Tuana B.S."/>
        </authorList>
    </citation>
    <scope>NUCLEOTIDE SEQUENCE [MRNA] (ISOFORMS 1; 2 AND 3)</scope>
    <scope>SUBCELLULAR LOCATION</scope>
    <scope>TISSUE SPECIFICITY</scope>
    <source>
        <tissue>Heart</tissue>
    </source>
</reference>
<reference key="2">
    <citation type="journal article" date="2000" name="J. Biol. Chem.">
        <title>Alternative splicing, expression, and genomic structure of the 3' region of the gene encoding the sarcolemmal-associated proteins (SLAPs) defines a novel class of coiled-coil tail-anchored membrane proteins.</title>
        <authorList>
            <person name="Wielowieyski P.A."/>
            <person name="Sevinc S."/>
            <person name="Guzzo R."/>
            <person name="Salih M."/>
            <person name="Wigle J.T."/>
            <person name="Tuana B.S."/>
        </authorList>
    </citation>
    <scope>NUCLEOTIDE SEQUENCE [MRNA] (ISOFORM 4)</scope>
    <scope>ALTERNATIVE SPLICING</scope>
    <scope>TISSUE SPECIFICITY</scope>
    <source>
        <tissue>Heart</tissue>
    </source>
</reference>
<reference key="3">
    <citation type="journal article" date="2005" name="Am. J. Physiol.">
        <title>Molecular properties of cardiac tail-anchored membrane protein SLMAP are consistent with structural role in arrangement of excitation-contraction coupling apparatus.</title>
        <authorList>
            <person name="Guzzo R.M."/>
            <person name="Salih M."/>
            <person name="Moore E.D."/>
            <person name="Tuana B.S."/>
        </authorList>
    </citation>
    <scope>INTERACTION WITH MYOSIN</scope>
</reference>
<sequence length="771" mass="88525">MPSALAIFTCRPNSHPFQERHVYLDEPIKIGRSVARCRPAQNNATFDCKVLSRNHALVWFDHKTGKFYLQDTKSSNGTFINSQRLSRGSEESPPCEILSGDIIQFGVDVTENTRKVTHGCIVSTIKLFLPDGMEARLRSDVIHAPLPSPVDKVAANTPSMYSQELFQLSQYLQEALHREQMLEQKLATLQRLLAITQEASDTSWQALIDEDRLLSRLEVMGNQLQACSKNQTEDSLRKELIALQEDKHNYETTAKESLRRVLQEKIEVVRKLSEVERSLSNTEDECTHLKEMNERTQEELRELANKYNGAVNEIKDLSDKLKVAEGKQEEIQQKGQAEKKELQHKIDEMEEKEQELQAKIEALQADNDFTNERLTALQEHLLSKSGGDCTFIHQFIECQKKLIVEGHLTKVVEETKLAKENQARAKESDLSDTLSPSKEKSSDDTTDAQMDEQDLNESLAKVSLLKALLEEERKAYRNQVEESSKQIQVLQAQLQRLHMDIENLREEKDNEITSTRDELLSARDEILLLHQAAEKAASERDTDIASLQEELKKVRAELERWRKAASEYEKEVTSLQSSFQLRCQQCEDQQKEEATRLQGELEKLRKEWNVLETECHSLKKENVLLSSELQRQEKELHNSQKQSLELTSDLSILQMTRKELENQMGSLKEQHLRDSADLKILLSKAENQAKDVQKEYEKTQTVLSELKLKFEMTEQEKQSITDELKQCKDNLKLLQEKGNNNKPWPWMPMLAALVAVTAIVLYVPGLARASP</sequence>
<keyword id="KW-0025">Alternative splicing</keyword>
<keyword id="KW-1003">Cell membrane</keyword>
<keyword id="KW-0175">Coiled coil</keyword>
<keyword id="KW-0963">Cytoplasm</keyword>
<keyword id="KW-0206">Cytoskeleton</keyword>
<keyword id="KW-0256">Endoplasmic reticulum</keyword>
<keyword id="KW-0472">Membrane</keyword>
<keyword id="KW-0496">Mitochondrion</keyword>
<keyword id="KW-0597">Phosphoprotein</keyword>
<keyword id="KW-1185">Reference proteome</keyword>
<keyword id="KW-0812">Transmembrane</keyword>
<keyword id="KW-1133">Transmembrane helix</keyword>